<name>Y1285_METMJ</name>
<accession>A3CV15</accession>
<reference key="1">
    <citation type="journal article" date="2009" name="Stand. Genomic Sci.">
        <title>Complete genome sequence of Methanoculleus marisnigri Romesser et al. 1981 type strain JR1.</title>
        <authorList>
            <person name="Anderson I.J."/>
            <person name="Sieprawska-Lupa M."/>
            <person name="Lapidus A."/>
            <person name="Nolan M."/>
            <person name="Copeland A."/>
            <person name="Glavina Del Rio T."/>
            <person name="Tice H."/>
            <person name="Dalin E."/>
            <person name="Barry K."/>
            <person name="Saunders E."/>
            <person name="Han C."/>
            <person name="Brettin T."/>
            <person name="Detter J.C."/>
            <person name="Bruce D."/>
            <person name="Mikhailova N."/>
            <person name="Pitluck S."/>
            <person name="Hauser L."/>
            <person name="Land M."/>
            <person name="Lucas S."/>
            <person name="Richardson P."/>
            <person name="Whitman W.B."/>
            <person name="Kyrpides N.C."/>
        </authorList>
    </citation>
    <scope>NUCLEOTIDE SEQUENCE [LARGE SCALE GENOMIC DNA]</scope>
    <source>
        <strain>ATCC 35101 / DSM 1498 / JR1</strain>
    </source>
</reference>
<organism>
    <name type="scientific">Methanoculleus marisnigri (strain ATCC 35101 / DSM 1498 / JR1)</name>
    <dbReference type="NCBI Taxonomy" id="368407"/>
    <lineage>
        <taxon>Archaea</taxon>
        <taxon>Methanobacteriati</taxon>
        <taxon>Methanobacteriota</taxon>
        <taxon>Stenosarchaea group</taxon>
        <taxon>Methanomicrobia</taxon>
        <taxon>Methanomicrobiales</taxon>
        <taxon>Methanomicrobiaceae</taxon>
        <taxon>Methanoculleus</taxon>
    </lineage>
</organism>
<proteinExistence type="inferred from homology"/>
<protein>
    <recommendedName>
        <fullName evidence="1">UPF0145 protein Memar_1285</fullName>
    </recommendedName>
</protein>
<dbReference type="EMBL" id="CP000562">
    <property type="protein sequence ID" value="ABN57215.1"/>
    <property type="molecule type" value="Genomic_DNA"/>
</dbReference>
<dbReference type="RefSeq" id="WP_011844126.1">
    <property type="nucleotide sequence ID" value="NC_009051.1"/>
</dbReference>
<dbReference type="SMR" id="A3CV15"/>
<dbReference type="STRING" id="368407.Memar_1285"/>
<dbReference type="GeneID" id="4846879"/>
<dbReference type="KEGG" id="mem:Memar_1285"/>
<dbReference type="eggNOG" id="arCOG02287">
    <property type="taxonomic scope" value="Archaea"/>
</dbReference>
<dbReference type="HOGENOM" id="CLU_117144_1_2_2"/>
<dbReference type="OrthoDB" id="59443at2157"/>
<dbReference type="Proteomes" id="UP000002146">
    <property type="component" value="Chromosome"/>
</dbReference>
<dbReference type="Gene3D" id="3.30.110.70">
    <property type="entry name" value="Hypothetical protein apc22750. Chain B"/>
    <property type="match status" value="1"/>
</dbReference>
<dbReference type="HAMAP" id="MF_00338">
    <property type="entry name" value="UPF0145"/>
    <property type="match status" value="1"/>
</dbReference>
<dbReference type="InterPro" id="IPR035439">
    <property type="entry name" value="UPF0145_dom_sf"/>
</dbReference>
<dbReference type="InterPro" id="IPR002765">
    <property type="entry name" value="UPF0145_YbjQ-like"/>
</dbReference>
<dbReference type="PANTHER" id="PTHR34068:SF2">
    <property type="entry name" value="UPF0145 PROTEIN SCO3412"/>
    <property type="match status" value="1"/>
</dbReference>
<dbReference type="PANTHER" id="PTHR34068">
    <property type="entry name" value="UPF0145 PROTEIN YBJQ"/>
    <property type="match status" value="1"/>
</dbReference>
<dbReference type="Pfam" id="PF01906">
    <property type="entry name" value="YbjQ_1"/>
    <property type="match status" value="1"/>
</dbReference>
<dbReference type="SUPFAM" id="SSF117782">
    <property type="entry name" value="YbjQ-like"/>
    <property type="match status" value="1"/>
</dbReference>
<gene>
    <name type="ordered locus">Memar_1285</name>
</gene>
<comment type="similarity">
    <text evidence="1">Belongs to the UPF0145 family.</text>
</comment>
<feature type="chain" id="PRO_1000013015" description="UPF0145 protein Memar_1285">
    <location>
        <begin position="1"/>
        <end position="107"/>
    </location>
</feature>
<sequence length="107" mass="11175">MILTTTEEVPGYAVGEVLGVVSGNTVRAKNVGRDITAGLKSLVGGELEEYTAMLADARTEAYNRMANAARDLGADAVVNVRFATSQTMAAAAELLAYGTAVKLVPRK</sequence>
<evidence type="ECO:0000255" key="1">
    <source>
        <dbReference type="HAMAP-Rule" id="MF_00338"/>
    </source>
</evidence>